<evidence type="ECO:0000250" key="1">
    <source>
        <dbReference type="UniProtKB" id="Q8BYR8"/>
    </source>
</evidence>
<evidence type="ECO:0000250" key="2">
    <source>
        <dbReference type="UniProtKB" id="Q96JW4"/>
    </source>
</evidence>
<evidence type="ECO:0000255" key="3"/>
<evidence type="ECO:0000305" key="4"/>
<name>S41A2_CHICK</name>
<proteinExistence type="evidence at transcript level"/>
<sequence>MTNCKGRSTITKTNSKVHDREGFVNWTISLSTVQSDKFLNLLLSMVPVVYQINQDERHKKVNGVWQDGLQPAGHNYNVKSDQHVEYHHFSEQTFHGSNGHSPSSCSPKYDDFSSYNYCDGMDASETDAMLQEDNISSDSNEDIIVEGIRKQPKESSSIMALQILVPFLLAGFGTVTAGMVLDIVQHWDVFKNVTEVFILVPALLGLKGNLEMTLASRLSTAVNIGKMDSPIEKWNLIIGNLALKQVQATVVGFLAAVAAVILGWIPEGKYSFSHSILLCSSSVATAFIASLLQGIIMVGVIVGSKKTGINPDNVATPIAASFGDLITLAILAWISQGLYTCLETYYYVSPLVGAFFLALTPMGIVIAAKHPATRTVLHSGWEPVITAMIISSIGGLILDTTVSDPNLVGIVVYTPVINGIGGNLVAIQASRISTYLHLHSIPGELPEEAKGCYYPCRTYYGTGVNNKSAQVLLLLVIPGHLIFLYTIHLMKSGHTSLTPIFIAVYLFAALLQVFTLLWIADWMVHHFWKKGKDPDSFSIPYLTALGDLLGTALLAVGFHFLWLIGDRDGDVGD</sequence>
<accession>Q5ZHX6</accession>
<keyword id="KW-1003">Cell membrane</keyword>
<keyword id="KW-0406">Ion transport</keyword>
<keyword id="KW-0460">Magnesium</keyword>
<keyword id="KW-0472">Membrane</keyword>
<keyword id="KW-1185">Reference proteome</keyword>
<keyword id="KW-0677">Repeat</keyword>
<keyword id="KW-0812">Transmembrane</keyword>
<keyword id="KW-1133">Transmembrane helix</keyword>
<keyword id="KW-0813">Transport</keyword>
<reference key="1">
    <citation type="journal article" date="2005" name="Genome Biol.">
        <title>Full-length cDNAs from chicken bursal lymphocytes to facilitate gene function analysis.</title>
        <authorList>
            <person name="Caldwell R.B."/>
            <person name="Kierzek A.M."/>
            <person name="Arakawa H."/>
            <person name="Bezzubov Y."/>
            <person name="Zaim J."/>
            <person name="Fiedler P."/>
            <person name="Kutter S."/>
            <person name="Blagodatski A."/>
            <person name="Kostovska D."/>
            <person name="Koter M."/>
            <person name="Plachy J."/>
            <person name="Carninci P."/>
            <person name="Hayashizaki Y."/>
            <person name="Buerstedde J.-M."/>
        </authorList>
    </citation>
    <scope>NUCLEOTIDE SEQUENCE [LARGE SCALE MRNA]</scope>
    <source>
        <strain>CB</strain>
        <tissue>Bursa of Fabricius</tissue>
    </source>
</reference>
<organism>
    <name type="scientific">Gallus gallus</name>
    <name type="common">Chicken</name>
    <dbReference type="NCBI Taxonomy" id="9031"/>
    <lineage>
        <taxon>Eukaryota</taxon>
        <taxon>Metazoa</taxon>
        <taxon>Chordata</taxon>
        <taxon>Craniata</taxon>
        <taxon>Vertebrata</taxon>
        <taxon>Euteleostomi</taxon>
        <taxon>Archelosauria</taxon>
        <taxon>Archosauria</taxon>
        <taxon>Dinosauria</taxon>
        <taxon>Saurischia</taxon>
        <taxon>Theropoda</taxon>
        <taxon>Coelurosauria</taxon>
        <taxon>Aves</taxon>
        <taxon>Neognathae</taxon>
        <taxon>Galloanserae</taxon>
        <taxon>Galliformes</taxon>
        <taxon>Phasianidae</taxon>
        <taxon>Phasianinae</taxon>
        <taxon>Gallus</taxon>
    </lineage>
</organism>
<protein>
    <recommendedName>
        <fullName>Solute carrier family 41 member 2</fullName>
    </recommendedName>
</protein>
<feature type="chain" id="PRO_0000295043" description="Solute carrier family 41 member 2">
    <location>
        <begin position="1"/>
        <end position="573"/>
    </location>
</feature>
<feature type="topological domain" description="Extracellular" evidence="2">
    <location>
        <begin position="1"/>
        <end position="162"/>
    </location>
</feature>
<feature type="transmembrane region" description="Helical" evidence="3">
    <location>
        <begin position="163"/>
        <end position="183"/>
    </location>
</feature>
<feature type="topological domain" description="Cytoplasmic" evidence="2">
    <location>
        <begin position="184"/>
        <end position="195"/>
    </location>
</feature>
<feature type="transmembrane region" description="Helical" evidence="3">
    <location>
        <begin position="196"/>
        <end position="216"/>
    </location>
</feature>
<feature type="topological domain" description="Extracellular" evidence="2">
    <location>
        <begin position="217"/>
        <end position="245"/>
    </location>
</feature>
<feature type="transmembrane region" description="Helical" evidence="3">
    <location>
        <begin position="246"/>
        <end position="266"/>
    </location>
</feature>
<feature type="topological domain" description="Cytoplasmic" evidence="2">
    <location>
        <begin position="267"/>
        <end position="282"/>
    </location>
</feature>
<feature type="transmembrane region" description="Helical" evidence="3">
    <location>
        <begin position="283"/>
        <end position="303"/>
    </location>
</feature>
<feature type="topological domain" description="Extracellular" evidence="2">
    <location>
        <begin position="304"/>
        <end position="313"/>
    </location>
</feature>
<feature type="transmembrane region" description="Helical" evidence="3">
    <location>
        <begin position="314"/>
        <end position="334"/>
    </location>
</feature>
<feature type="topological domain" description="Cytoplasmic" evidence="2">
    <location>
        <begin position="335"/>
        <end position="347"/>
    </location>
</feature>
<feature type="transmembrane region" description="Helical" evidence="3">
    <location>
        <begin position="348"/>
        <end position="368"/>
    </location>
</feature>
<feature type="topological domain" description="Extracellular" evidence="2">
    <location>
        <begin position="369"/>
        <end position="376"/>
    </location>
</feature>
<feature type="transmembrane region" description="Helical" evidence="3">
    <location>
        <begin position="377"/>
        <end position="397"/>
    </location>
</feature>
<feature type="topological domain" description="Cytoplasmic" evidence="2">
    <location>
        <begin position="398"/>
        <end position="406"/>
    </location>
</feature>
<feature type="transmembrane region" description="Helical" evidence="3">
    <location>
        <begin position="407"/>
        <end position="427"/>
    </location>
</feature>
<feature type="topological domain" description="Extracellular" evidence="2">
    <location>
        <begin position="428"/>
        <end position="469"/>
    </location>
</feature>
<feature type="transmembrane region" description="Helical" evidence="3">
    <location>
        <begin position="470"/>
        <end position="490"/>
    </location>
</feature>
<feature type="topological domain" description="Cytoplasmic" evidence="2">
    <location>
        <begin position="491"/>
        <end position="499"/>
    </location>
</feature>
<feature type="transmembrane region" description="Helical" evidence="3">
    <location>
        <begin position="500"/>
        <end position="520"/>
    </location>
</feature>
<feature type="topological domain" description="Extracellular" evidence="3">
    <location>
        <begin position="521"/>
        <end position="543"/>
    </location>
</feature>
<feature type="transmembrane region" description="Helical" evidence="3">
    <location>
        <begin position="544"/>
        <end position="564"/>
    </location>
</feature>
<feature type="topological domain" description="Cytoplasmic" evidence="2">
    <location>
        <begin position="565"/>
        <end position="573"/>
    </location>
</feature>
<dbReference type="EMBL" id="AJ721008">
    <property type="protein sequence ID" value="CAG32667.1"/>
    <property type="molecule type" value="mRNA"/>
</dbReference>
<dbReference type="RefSeq" id="NP_001026654.1">
    <property type="nucleotide sequence ID" value="NM_001031483.1"/>
</dbReference>
<dbReference type="RefSeq" id="XP_046764512.1">
    <property type="nucleotide sequence ID" value="XM_046908556.1"/>
</dbReference>
<dbReference type="RefSeq" id="XP_046764513.1">
    <property type="nucleotide sequence ID" value="XM_046908557.1"/>
</dbReference>
<dbReference type="FunCoup" id="Q5ZHX6">
    <property type="interactions" value="271"/>
</dbReference>
<dbReference type="STRING" id="9031.ENSGALP00000020703"/>
<dbReference type="PaxDb" id="9031-ENSGALP00000042624"/>
<dbReference type="GeneID" id="427913"/>
<dbReference type="KEGG" id="gga:427913"/>
<dbReference type="CTD" id="84102"/>
<dbReference type="VEuPathDB" id="HostDB:geneid_427913"/>
<dbReference type="eggNOG" id="KOG3788">
    <property type="taxonomic scope" value="Eukaryota"/>
</dbReference>
<dbReference type="InParanoid" id="Q5ZHX6"/>
<dbReference type="OrthoDB" id="5791097at2759"/>
<dbReference type="PhylomeDB" id="Q5ZHX6"/>
<dbReference type="PRO" id="PR:Q5ZHX6"/>
<dbReference type="Proteomes" id="UP000000539">
    <property type="component" value="Unassembled WGS sequence"/>
</dbReference>
<dbReference type="GO" id="GO:0005886">
    <property type="term" value="C:plasma membrane"/>
    <property type="evidence" value="ECO:0000318"/>
    <property type="project" value="GO_Central"/>
</dbReference>
<dbReference type="GO" id="GO:0008324">
    <property type="term" value="F:monoatomic cation transmembrane transporter activity"/>
    <property type="evidence" value="ECO:0007669"/>
    <property type="project" value="InterPro"/>
</dbReference>
<dbReference type="GO" id="GO:0006824">
    <property type="term" value="P:cobalt ion transport"/>
    <property type="evidence" value="ECO:0000250"/>
    <property type="project" value="UniProtKB"/>
</dbReference>
<dbReference type="GO" id="GO:0006826">
    <property type="term" value="P:iron ion transport"/>
    <property type="evidence" value="ECO:0000250"/>
    <property type="project" value="UniProtKB"/>
</dbReference>
<dbReference type="GO" id="GO:0015693">
    <property type="term" value="P:magnesium ion transport"/>
    <property type="evidence" value="ECO:0000250"/>
    <property type="project" value="UniProtKB"/>
</dbReference>
<dbReference type="GO" id="GO:0006828">
    <property type="term" value="P:manganese ion transport"/>
    <property type="evidence" value="ECO:0000250"/>
    <property type="project" value="UniProtKB"/>
</dbReference>
<dbReference type="GO" id="GO:0015675">
    <property type="term" value="P:nickel cation transport"/>
    <property type="evidence" value="ECO:0000250"/>
    <property type="project" value="UniProtKB"/>
</dbReference>
<dbReference type="FunFam" id="1.10.357.20:FF:000001">
    <property type="entry name" value="Solute carrier family 41 member 2"/>
    <property type="match status" value="1"/>
</dbReference>
<dbReference type="FunFam" id="1.10.357.20:FF:000002">
    <property type="entry name" value="Solute carrier family 41, member 2"/>
    <property type="match status" value="1"/>
</dbReference>
<dbReference type="Gene3D" id="1.10.357.20">
    <property type="entry name" value="SLC41 divalent cation transporters, integral membrane domain"/>
    <property type="match status" value="2"/>
</dbReference>
<dbReference type="InterPro" id="IPR006667">
    <property type="entry name" value="SLC41_membr_dom"/>
</dbReference>
<dbReference type="InterPro" id="IPR036739">
    <property type="entry name" value="SLC41_membr_dom_sf"/>
</dbReference>
<dbReference type="InterPro" id="IPR045349">
    <property type="entry name" value="SLC41A1-3"/>
</dbReference>
<dbReference type="PANTHER" id="PTHR16228">
    <property type="entry name" value="DIVALENT CATION TRANSPORTER SOLUTE CARRIER FAMILY 41"/>
    <property type="match status" value="1"/>
</dbReference>
<dbReference type="PANTHER" id="PTHR16228:SF25">
    <property type="entry name" value="SOLUTE CARRIER FAMILY 41 MEMBER 2"/>
    <property type="match status" value="1"/>
</dbReference>
<dbReference type="Pfam" id="PF01769">
    <property type="entry name" value="MgtE"/>
    <property type="match status" value="2"/>
</dbReference>
<dbReference type="SUPFAM" id="SSF161093">
    <property type="entry name" value="MgtE membrane domain-like"/>
    <property type="match status" value="2"/>
</dbReference>
<gene>
    <name type="primary">SLC41A2</name>
    <name type="ORF">RCJMB04_32e4</name>
</gene>
<comment type="function">
    <text evidence="1">Acts as a plasma-membrane magnesium transporter. Can also mediate the transport of other divalent metal cations in an order of Ba(2+) &gt; Ni(2+) &gt; Co(2+) &gt; Fe(2+) &gt; Mn(2+).</text>
</comment>
<comment type="catalytic activity">
    <reaction evidence="1">
        <text>Mg(2+)(in) = Mg(2+)(out)</text>
        <dbReference type="Rhea" id="RHEA:29827"/>
        <dbReference type="ChEBI" id="CHEBI:18420"/>
    </reaction>
</comment>
<comment type="catalytic activity">
    <reaction evidence="1">
        <text>Mn(2+)(in) = Mn(2+)(out)</text>
        <dbReference type="Rhea" id="RHEA:28699"/>
        <dbReference type="ChEBI" id="CHEBI:29035"/>
    </reaction>
</comment>
<comment type="catalytic activity">
    <reaction evidence="1">
        <text>Co(2+)(in) = Co(2+)(out)</text>
        <dbReference type="Rhea" id="RHEA:28578"/>
        <dbReference type="ChEBI" id="CHEBI:48828"/>
    </reaction>
</comment>
<comment type="catalytic activity">
    <reaction evidence="1">
        <text>Ni(2+)(in) = Ni(2+)(out)</text>
        <dbReference type="Rhea" id="RHEA:29831"/>
        <dbReference type="ChEBI" id="CHEBI:49786"/>
    </reaction>
</comment>
<comment type="catalytic activity">
    <reaction evidence="1">
        <text>Fe(2+)(in) = Fe(2+)(out)</text>
        <dbReference type="Rhea" id="RHEA:28486"/>
        <dbReference type="ChEBI" id="CHEBI:29033"/>
    </reaction>
</comment>
<comment type="subcellular location">
    <subcellularLocation>
        <location evidence="2">Cell membrane</location>
        <topology evidence="3">Multi-pass membrane protein</topology>
    </subcellularLocation>
</comment>
<comment type="similarity">
    <text evidence="4">Belongs to the SLC41A transporter family.</text>
</comment>